<evidence type="ECO:0000255" key="1">
    <source>
        <dbReference type="HAMAP-Rule" id="MF_00054"/>
    </source>
</evidence>
<feature type="chain" id="PRO_1000057386" description="Elongation factor G">
    <location>
        <begin position="1"/>
        <end position="702"/>
    </location>
</feature>
<feature type="domain" description="tr-type G">
    <location>
        <begin position="8"/>
        <end position="290"/>
    </location>
</feature>
<feature type="binding site" evidence="1">
    <location>
        <begin position="17"/>
        <end position="24"/>
    </location>
    <ligand>
        <name>GTP</name>
        <dbReference type="ChEBI" id="CHEBI:37565"/>
    </ligand>
</feature>
<feature type="binding site" evidence="1">
    <location>
        <begin position="87"/>
        <end position="91"/>
    </location>
    <ligand>
        <name>GTP</name>
        <dbReference type="ChEBI" id="CHEBI:37565"/>
    </ligand>
</feature>
<feature type="binding site" evidence="1">
    <location>
        <begin position="141"/>
        <end position="144"/>
    </location>
    <ligand>
        <name>GTP</name>
        <dbReference type="ChEBI" id="CHEBI:37565"/>
    </ligand>
</feature>
<sequence length="702" mass="77600">MARKIPLHRVRNIGIAAHIDAGKTTTTERILFYTGVSHKIGEVHEGAATMDWMEQEQERGITITSAATTCHWNHPKTNEQLQVNIIDTPGHVDFTIEVERSMRVLDGAVAVFCSVGGVQPQSETVWRQANKYGVPRIIYVNKMDRTGANFFNVEAQVRDRLKANPVPIQVPIGAEENFRGMVDLIKMKAYTYNLDAQAGEMYKIEDIPADLEDVVAEYREKLIEAAAESSEELMEKYLEGTELTEDEIVAGLKKRCLAMEITPMVCGTSFKNKGVQPLLDAVAMYLPAPTEVADIKGETQDGDAIIVPSTDKGEVAALAFKIMTDPFVGQLTFTRVYRGVLESGTYVLNSTKMKKERIGRLLKMHANSREEIKELYAGEIGAVVGLKDTITGDTLASEKDPVILERMDFPDPVISVAVEPKTKADQEKMGIALGKLAEEDPSFRVNTDEESGQTIISGMGELHLEILVDRMKREFKVEAEVGAPQVAYRETIRNAVKQEYKYAKQSGGKGQYGHVYLEIKPLPSGSEPNFKFNNEIKGGVVPKEYIPAVEKGCAEAMLGGILAGYPMVDIEVTLYDGSYHDVDSSEMAFKLAASMGFKQGCRSAAAGAVILEPIMKVEIETPEDYMGDVIGDCNKRRGQVQSMDDRAGIKLVTAMIPLSEMFGYSTDLRSMSQGRATYSMIFDAYQEVPRNVSEEIMKKRNG</sequence>
<accession>A8EW86</accession>
<comment type="function">
    <text evidence="1">Catalyzes the GTP-dependent ribosomal translocation step during translation elongation. During this step, the ribosome changes from the pre-translocational (PRE) to the post-translocational (POST) state as the newly formed A-site-bound peptidyl-tRNA and P-site-bound deacylated tRNA move to the P and E sites, respectively. Catalyzes the coordinated movement of the two tRNA molecules, the mRNA and conformational changes in the ribosome.</text>
</comment>
<comment type="subcellular location">
    <subcellularLocation>
        <location evidence="1">Cytoplasm</location>
    </subcellularLocation>
</comment>
<comment type="similarity">
    <text evidence="1">Belongs to the TRAFAC class translation factor GTPase superfamily. Classic translation factor GTPase family. EF-G/EF-2 subfamily.</text>
</comment>
<dbReference type="EMBL" id="CP000361">
    <property type="protein sequence ID" value="ABV68209.1"/>
    <property type="molecule type" value="Genomic_DNA"/>
</dbReference>
<dbReference type="RefSeq" id="WP_012147884.1">
    <property type="nucleotide sequence ID" value="NC_009850.1"/>
</dbReference>
<dbReference type="SMR" id="A8EW86"/>
<dbReference type="STRING" id="367737.Abu_1987"/>
<dbReference type="GeneID" id="24304243"/>
<dbReference type="KEGG" id="abu:Abu_1987"/>
<dbReference type="eggNOG" id="COG0480">
    <property type="taxonomic scope" value="Bacteria"/>
</dbReference>
<dbReference type="HOGENOM" id="CLU_002794_4_1_7"/>
<dbReference type="Proteomes" id="UP000001136">
    <property type="component" value="Chromosome"/>
</dbReference>
<dbReference type="GO" id="GO:0005737">
    <property type="term" value="C:cytoplasm"/>
    <property type="evidence" value="ECO:0007669"/>
    <property type="project" value="UniProtKB-SubCell"/>
</dbReference>
<dbReference type="GO" id="GO:0005525">
    <property type="term" value="F:GTP binding"/>
    <property type="evidence" value="ECO:0007669"/>
    <property type="project" value="UniProtKB-UniRule"/>
</dbReference>
<dbReference type="GO" id="GO:0003924">
    <property type="term" value="F:GTPase activity"/>
    <property type="evidence" value="ECO:0007669"/>
    <property type="project" value="InterPro"/>
</dbReference>
<dbReference type="GO" id="GO:0003746">
    <property type="term" value="F:translation elongation factor activity"/>
    <property type="evidence" value="ECO:0007669"/>
    <property type="project" value="UniProtKB-UniRule"/>
</dbReference>
<dbReference type="GO" id="GO:0032790">
    <property type="term" value="P:ribosome disassembly"/>
    <property type="evidence" value="ECO:0007669"/>
    <property type="project" value="TreeGrafter"/>
</dbReference>
<dbReference type="CDD" id="cd01886">
    <property type="entry name" value="EF-G"/>
    <property type="match status" value="1"/>
</dbReference>
<dbReference type="CDD" id="cd16262">
    <property type="entry name" value="EFG_III"/>
    <property type="match status" value="1"/>
</dbReference>
<dbReference type="CDD" id="cd01434">
    <property type="entry name" value="EFG_mtEFG1_IV"/>
    <property type="match status" value="1"/>
</dbReference>
<dbReference type="CDD" id="cd03713">
    <property type="entry name" value="EFG_mtEFG_C"/>
    <property type="match status" value="1"/>
</dbReference>
<dbReference type="CDD" id="cd04088">
    <property type="entry name" value="EFG_mtEFG_II"/>
    <property type="match status" value="1"/>
</dbReference>
<dbReference type="FunFam" id="2.40.30.10:FF:000006">
    <property type="entry name" value="Elongation factor G"/>
    <property type="match status" value="1"/>
</dbReference>
<dbReference type="FunFam" id="3.30.230.10:FF:000003">
    <property type="entry name" value="Elongation factor G"/>
    <property type="match status" value="1"/>
</dbReference>
<dbReference type="FunFam" id="3.30.70.240:FF:000001">
    <property type="entry name" value="Elongation factor G"/>
    <property type="match status" value="1"/>
</dbReference>
<dbReference type="FunFam" id="3.30.70.870:FF:000001">
    <property type="entry name" value="Elongation factor G"/>
    <property type="match status" value="1"/>
</dbReference>
<dbReference type="FunFam" id="3.40.50.300:FF:000029">
    <property type="entry name" value="Elongation factor G"/>
    <property type="match status" value="1"/>
</dbReference>
<dbReference type="Gene3D" id="3.30.230.10">
    <property type="match status" value="1"/>
</dbReference>
<dbReference type="Gene3D" id="3.30.70.240">
    <property type="match status" value="1"/>
</dbReference>
<dbReference type="Gene3D" id="3.30.70.870">
    <property type="entry name" value="Elongation Factor G (Translational Gtpase), domain 3"/>
    <property type="match status" value="1"/>
</dbReference>
<dbReference type="Gene3D" id="3.40.50.300">
    <property type="entry name" value="P-loop containing nucleotide triphosphate hydrolases"/>
    <property type="match status" value="1"/>
</dbReference>
<dbReference type="Gene3D" id="2.40.30.10">
    <property type="entry name" value="Translation factors"/>
    <property type="match status" value="1"/>
</dbReference>
<dbReference type="HAMAP" id="MF_00054_B">
    <property type="entry name" value="EF_G_EF_2_B"/>
    <property type="match status" value="1"/>
</dbReference>
<dbReference type="InterPro" id="IPR041095">
    <property type="entry name" value="EFG_II"/>
</dbReference>
<dbReference type="InterPro" id="IPR009022">
    <property type="entry name" value="EFG_III"/>
</dbReference>
<dbReference type="InterPro" id="IPR035647">
    <property type="entry name" value="EFG_III/V"/>
</dbReference>
<dbReference type="InterPro" id="IPR047872">
    <property type="entry name" value="EFG_IV"/>
</dbReference>
<dbReference type="InterPro" id="IPR035649">
    <property type="entry name" value="EFG_V"/>
</dbReference>
<dbReference type="InterPro" id="IPR000640">
    <property type="entry name" value="EFG_V-like"/>
</dbReference>
<dbReference type="InterPro" id="IPR004161">
    <property type="entry name" value="EFTu-like_2"/>
</dbReference>
<dbReference type="InterPro" id="IPR031157">
    <property type="entry name" value="G_TR_CS"/>
</dbReference>
<dbReference type="InterPro" id="IPR027417">
    <property type="entry name" value="P-loop_NTPase"/>
</dbReference>
<dbReference type="InterPro" id="IPR020568">
    <property type="entry name" value="Ribosomal_Su5_D2-typ_SF"/>
</dbReference>
<dbReference type="InterPro" id="IPR014721">
    <property type="entry name" value="Ribsml_uS5_D2-typ_fold_subgr"/>
</dbReference>
<dbReference type="InterPro" id="IPR005225">
    <property type="entry name" value="Small_GTP-bd"/>
</dbReference>
<dbReference type="InterPro" id="IPR000795">
    <property type="entry name" value="T_Tr_GTP-bd_dom"/>
</dbReference>
<dbReference type="InterPro" id="IPR009000">
    <property type="entry name" value="Transl_B-barrel_sf"/>
</dbReference>
<dbReference type="InterPro" id="IPR004540">
    <property type="entry name" value="Transl_elong_EFG/EF2"/>
</dbReference>
<dbReference type="InterPro" id="IPR005517">
    <property type="entry name" value="Transl_elong_EFG/EF2_IV"/>
</dbReference>
<dbReference type="NCBIfam" id="TIGR00484">
    <property type="entry name" value="EF-G"/>
    <property type="match status" value="1"/>
</dbReference>
<dbReference type="NCBIfam" id="NF009379">
    <property type="entry name" value="PRK12740.1-3"/>
    <property type="match status" value="1"/>
</dbReference>
<dbReference type="NCBIfam" id="NF009381">
    <property type="entry name" value="PRK12740.1-5"/>
    <property type="match status" value="1"/>
</dbReference>
<dbReference type="NCBIfam" id="TIGR00231">
    <property type="entry name" value="small_GTP"/>
    <property type="match status" value="1"/>
</dbReference>
<dbReference type="PANTHER" id="PTHR43261:SF1">
    <property type="entry name" value="RIBOSOME-RELEASING FACTOR 2, MITOCHONDRIAL"/>
    <property type="match status" value="1"/>
</dbReference>
<dbReference type="PANTHER" id="PTHR43261">
    <property type="entry name" value="TRANSLATION ELONGATION FACTOR G-RELATED"/>
    <property type="match status" value="1"/>
</dbReference>
<dbReference type="Pfam" id="PF00679">
    <property type="entry name" value="EFG_C"/>
    <property type="match status" value="1"/>
</dbReference>
<dbReference type="Pfam" id="PF14492">
    <property type="entry name" value="EFG_III"/>
    <property type="match status" value="1"/>
</dbReference>
<dbReference type="Pfam" id="PF03764">
    <property type="entry name" value="EFG_IV"/>
    <property type="match status" value="1"/>
</dbReference>
<dbReference type="Pfam" id="PF00009">
    <property type="entry name" value="GTP_EFTU"/>
    <property type="match status" value="1"/>
</dbReference>
<dbReference type="Pfam" id="PF03144">
    <property type="entry name" value="GTP_EFTU_D2"/>
    <property type="match status" value="1"/>
</dbReference>
<dbReference type="PRINTS" id="PR00315">
    <property type="entry name" value="ELONGATNFCT"/>
</dbReference>
<dbReference type="SMART" id="SM00838">
    <property type="entry name" value="EFG_C"/>
    <property type="match status" value="1"/>
</dbReference>
<dbReference type="SMART" id="SM00889">
    <property type="entry name" value="EFG_IV"/>
    <property type="match status" value="1"/>
</dbReference>
<dbReference type="SUPFAM" id="SSF54980">
    <property type="entry name" value="EF-G C-terminal domain-like"/>
    <property type="match status" value="2"/>
</dbReference>
<dbReference type="SUPFAM" id="SSF52540">
    <property type="entry name" value="P-loop containing nucleoside triphosphate hydrolases"/>
    <property type="match status" value="1"/>
</dbReference>
<dbReference type="SUPFAM" id="SSF54211">
    <property type="entry name" value="Ribosomal protein S5 domain 2-like"/>
    <property type="match status" value="1"/>
</dbReference>
<dbReference type="SUPFAM" id="SSF50447">
    <property type="entry name" value="Translation proteins"/>
    <property type="match status" value="1"/>
</dbReference>
<dbReference type="PROSITE" id="PS00301">
    <property type="entry name" value="G_TR_1"/>
    <property type="match status" value="1"/>
</dbReference>
<dbReference type="PROSITE" id="PS51722">
    <property type="entry name" value="G_TR_2"/>
    <property type="match status" value="1"/>
</dbReference>
<organism>
    <name type="scientific">Aliarcobacter butzleri (strain RM4018)</name>
    <name type="common">Arcobacter butzleri</name>
    <dbReference type="NCBI Taxonomy" id="367737"/>
    <lineage>
        <taxon>Bacteria</taxon>
        <taxon>Pseudomonadati</taxon>
        <taxon>Campylobacterota</taxon>
        <taxon>Epsilonproteobacteria</taxon>
        <taxon>Campylobacterales</taxon>
        <taxon>Arcobacteraceae</taxon>
        <taxon>Aliarcobacter</taxon>
    </lineage>
</organism>
<protein>
    <recommendedName>
        <fullName evidence="1">Elongation factor G</fullName>
        <shortName evidence="1">EF-G</shortName>
    </recommendedName>
</protein>
<gene>
    <name evidence="1" type="primary">fusA</name>
    <name type="ordered locus">Abu_1987</name>
</gene>
<proteinExistence type="inferred from homology"/>
<reference key="1">
    <citation type="journal article" date="2007" name="PLoS ONE">
        <title>The complete genome sequence and analysis of the Epsilonproteobacterium Arcobacter butzleri.</title>
        <authorList>
            <person name="Miller W.G."/>
            <person name="Parker C.T."/>
            <person name="Rubenfield M."/>
            <person name="Mendz G.L."/>
            <person name="Woesten M.M.S.M."/>
            <person name="Ussery D.W."/>
            <person name="Stolz J.F."/>
            <person name="Binnewies T.T."/>
            <person name="Hallin P.F."/>
            <person name="Wang G."/>
            <person name="Malek J.A."/>
            <person name="Rogosin A."/>
            <person name="Stanker L.H."/>
            <person name="Mandrell R.E."/>
        </authorList>
    </citation>
    <scope>NUCLEOTIDE SEQUENCE [LARGE SCALE GENOMIC DNA]</scope>
    <source>
        <strain>RM4018</strain>
    </source>
</reference>
<keyword id="KW-0963">Cytoplasm</keyword>
<keyword id="KW-0251">Elongation factor</keyword>
<keyword id="KW-0342">GTP-binding</keyword>
<keyword id="KW-0547">Nucleotide-binding</keyword>
<keyword id="KW-0648">Protein biosynthesis</keyword>
<keyword id="KW-1185">Reference proteome</keyword>
<name>EFG_ALIB4</name>